<dbReference type="EMBL" id="CP000450">
    <property type="protein sequence ID" value="ABI59396.1"/>
    <property type="molecule type" value="Genomic_DNA"/>
</dbReference>
<dbReference type="RefSeq" id="WP_011634216.1">
    <property type="nucleotide sequence ID" value="NC_008344.1"/>
</dbReference>
<dbReference type="SMR" id="Q0AGY6"/>
<dbReference type="STRING" id="335283.Neut_1141"/>
<dbReference type="KEGG" id="net:Neut_1141"/>
<dbReference type="eggNOG" id="COG1825">
    <property type="taxonomic scope" value="Bacteria"/>
</dbReference>
<dbReference type="HOGENOM" id="CLU_075939_0_1_4"/>
<dbReference type="OrthoDB" id="9806411at2"/>
<dbReference type="Proteomes" id="UP000001966">
    <property type="component" value="Chromosome"/>
</dbReference>
<dbReference type="GO" id="GO:0022625">
    <property type="term" value="C:cytosolic large ribosomal subunit"/>
    <property type="evidence" value="ECO:0007669"/>
    <property type="project" value="TreeGrafter"/>
</dbReference>
<dbReference type="GO" id="GO:0008097">
    <property type="term" value="F:5S rRNA binding"/>
    <property type="evidence" value="ECO:0007669"/>
    <property type="project" value="InterPro"/>
</dbReference>
<dbReference type="GO" id="GO:0003735">
    <property type="term" value="F:structural constituent of ribosome"/>
    <property type="evidence" value="ECO:0007669"/>
    <property type="project" value="InterPro"/>
</dbReference>
<dbReference type="GO" id="GO:0006412">
    <property type="term" value="P:translation"/>
    <property type="evidence" value="ECO:0007669"/>
    <property type="project" value="UniProtKB-UniRule"/>
</dbReference>
<dbReference type="CDD" id="cd00495">
    <property type="entry name" value="Ribosomal_L25_TL5_CTC"/>
    <property type="match status" value="1"/>
</dbReference>
<dbReference type="Gene3D" id="2.170.120.20">
    <property type="entry name" value="Ribosomal protein L25, beta domain"/>
    <property type="match status" value="1"/>
</dbReference>
<dbReference type="Gene3D" id="2.40.240.10">
    <property type="entry name" value="Ribosomal Protein L25, Chain P"/>
    <property type="match status" value="1"/>
</dbReference>
<dbReference type="HAMAP" id="MF_01336">
    <property type="entry name" value="Ribosomal_bL25"/>
    <property type="match status" value="1"/>
</dbReference>
<dbReference type="HAMAP" id="MF_01334">
    <property type="entry name" value="Ribosomal_bL25_CTC"/>
    <property type="match status" value="1"/>
</dbReference>
<dbReference type="InterPro" id="IPR020056">
    <property type="entry name" value="Rbsml_bL25/Gln-tRNA_synth_N"/>
</dbReference>
<dbReference type="InterPro" id="IPR011035">
    <property type="entry name" value="Ribosomal_bL25/Gln-tRNA_synth"/>
</dbReference>
<dbReference type="InterPro" id="IPR020057">
    <property type="entry name" value="Ribosomal_bL25_b-dom"/>
</dbReference>
<dbReference type="InterPro" id="IPR037121">
    <property type="entry name" value="Ribosomal_bL25_C"/>
</dbReference>
<dbReference type="InterPro" id="IPR001021">
    <property type="entry name" value="Ribosomal_bL25_long"/>
</dbReference>
<dbReference type="InterPro" id="IPR020055">
    <property type="entry name" value="Ribosomal_bL25_short"/>
</dbReference>
<dbReference type="InterPro" id="IPR029751">
    <property type="entry name" value="Ribosomal_L25_dom"/>
</dbReference>
<dbReference type="InterPro" id="IPR020930">
    <property type="entry name" value="Ribosomal_uL5_bac-type"/>
</dbReference>
<dbReference type="NCBIfam" id="TIGR00731">
    <property type="entry name" value="bL25_bact_ctc"/>
    <property type="match status" value="1"/>
</dbReference>
<dbReference type="NCBIfam" id="NF004128">
    <property type="entry name" value="PRK05618.1-2"/>
    <property type="match status" value="1"/>
</dbReference>
<dbReference type="NCBIfam" id="NF004130">
    <property type="entry name" value="PRK05618.1-5"/>
    <property type="match status" value="1"/>
</dbReference>
<dbReference type="NCBIfam" id="NF004612">
    <property type="entry name" value="PRK05943.1"/>
    <property type="match status" value="1"/>
</dbReference>
<dbReference type="PANTHER" id="PTHR33284">
    <property type="entry name" value="RIBOSOMAL PROTEIN L25/GLN-TRNA SYNTHETASE, ANTI-CODON-BINDING DOMAIN-CONTAINING PROTEIN"/>
    <property type="match status" value="1"/>
</dbReference>
<dbReference type="PANTHER" id="PTHR33284:SF1">
    <property type="entry name" value="RIBOSOMAL PROTEIN L25_GLN-TRNA SYNTHETASE, ANTI-CODON-BINDING DOMAIN-CONTAINING PROTEIN"/>
    <property type="match status" value="1"/>
</dbReference>
<dbReference type="Pfam" id="PF01386">
    <property type="entry name" value="Ribosomal_L25p"/>
    <property type="match status" value="1"/>
</dbReference>
<dbReference type="Pfam" id="PF14693">
    <property type="entry name" value="Ribosomal_TL5_C"/>
    <property type="match status" value="1"/>
</dbReference>
<dbReference type="SUPFAM" id="SSF50715">
    <property type="entry name" value="Ribosomal protein L25-like"/>
    <property type="match status" value="1"/>
</dbReference>
<gene>
    <name evidence="1" type="primary">rplY</name>
    <name evidence="1" type="synonym">ctc</name>
    <name type="ordered locus">Neut_1141</name>
</gene>
<accession>Q0AGY6</accession>
<organism>
    <name type="scientific">Nitrosomonas eutropha (strain DSM 101675 / C91 / Nm57)</name>
    <dbReference type="NCBI Taxonomy" id="335283"/>
    <lineage>
        <taxon>Bacteria</taxon>
        <taxon>Pseudomonadati</taxon>
        <taxon>Pseudomonadota</taxon>
        <taxon>Betaproteobacteria</taxon>
        <taxon>Nitrosomonadales</taxon>
        <taxon>Nitrosomonadaceae</taxon>
        <taxon>Nitrosomonas</taxon>
    </lineage>
</organism>
<keyword id="KW-0687">Ribonucleoprotein</keyword>
<keyword id="KW-0689">Ribosomal protein</keyword>
<keyword id="KW-0694">RNA-binding</keyword>
<keyword id="KW-0699">rRNA-binding</keyword>
<reference key="1">
    <citation type="journal article" date="2007" name="Environ. Microbiol.">
        <title>Whole-genome analysis of the ammonia-oxidizing bacterium, Nitrosomonas eutropha C91: implications for niche adaptation.</title>
        <authorList>
            <person name="Stein L.Y."/>
            <person name="Arp D.J."/>
            <person name="Berube P.M."/>
            <person name="Chain P.S."/>
            <person name="Hauser L."/>
            <person name="Jetten M.S."/>
            <person name="Klotz M.G."/>
            <person name="Larimer F.W."/>
            <person name="Norton J.M."/>
            <person name="Op den Camp H.J.M."/>
            <person name="Shin M."/>
            <person name="Wei X."/>
        </authorList>
    </citation>
    <scope>NUCLEOTIDE SEQUENCE [LARGE SCALE GENOMIC DNA]</scope>
    <source>
        <strain>DSM 101675 / C91 / Nm57</strain>
    </source>
</reference>
<sequence>MPIEISANSRNLHGTGANRRLRIQGRLPGVIYGGGGTAQPIDLDHKDLYYKLKTDVFHASILSINVDGKKEQVLLRDVQMHPFKQQVLHIDFQRIRQDQKIHVKVPLHFINADIAPGVKLSGGMISHVATEIEISCLPKDLPESITVDLSEMTAGSILHTSDLKLPENVEIPALLRGDNQPVSTLIMPRGGEVADESGEESA</sequence>
<proteinExistence type="inferred from homology"/>
<comment type="function">
    <text evidence="1">This is one of the proteins that binds to the 5S RNA in the ribosome where it forms part of the central protuberance.</text>
</comment>
<comment type="subunit">
    <text evidence="1">Part of the 50S ribosomal subunit; part of the 5S rRNA/L5/L18/L25 subcomplex. Contacts the 5S rRNA. Binds to the 5S rRNA independently of L5 and L18.</text>
</comment>
<comment type="similarity">
    <text evidence="1">Belongs to the bacterial ribosomal protein bL25 family. CTC subfamily.</text>
</comment>
<feature type="chain" id="PRO_1000052907" description="Large ribosomal subunit protein bL25">
    <location>
        <begin position="1"/>
        <end position="202"/>
    </location>
</feature>
<evidence type="ECO:0000255" key="1">
    <source>
        <dbReference type="HAMAP-Rule" id="MF_01334"/>
    </source>
</evidence>
<evidence type="ECO:0000305" key="2"/>
<protein>
    <recommendedName>
        <fullName evidence="1">Large ribosomal subunit protein bL25</fullName>
    </recommendedName>
    <alternativeName>
        <fullName evidence="2">50S ribosomal protein L25</fullName>
    </alternativeName>
    <alternativeName>
        <fullName evidence="1">General stress protein CTC</fullName>
    </alternativeName>
</protein>
<name>RL25_NITEC</name>